<evidence type="ECO:0000250" key="1">
    <source>
        <dbReference type="UniProtKB" id="P35813"/>
    </source>
</evidence>
<evidence type="ECO:0000250" key="2">
    <source>
        <dbReference type="UniProtKB" id="Q9VAH4"/>
    </source>
</evidence>
<evidence type="ECO:0000255" key="3"/>
<evidence type="ECO:0000255" key="4">
    <source>
        <dbReference type="PROSITE-ProRule" id="PRU01082"/>
    </source>
</evidence>
<evidence type="ECO:0000305" key="5"/>
<evidence type="ECO:0000312" key="6">
    <source>
        <dbReference type="EMBL" id="EAL27309.2"/>
    </source>
</evidence>
<comment type="catalytic activity">
    <reaction>
        <text>O-phospho-L-seryl-[protein] + H2O = L-seryl-[protein] + phosphate</text>
        <dbReference type="Rhea" id="RHEA:20629"/>
        <dbReference type="Rhea" id="RHEA-COMP:9863"/>
        <dbReference type="Rhea" id="RHEA-COMP:11604"/>
        <dbReference type="ChEBI" id="CHEBI:15377"/>
        <dbReference type="ChEBI" id="CHEBI:29999"/>
        <dbReference type="ChEBI" id="CHEBI:43474"/>
        <dbReference type="ChEBI" id="CHEBI:83421"/>
        <dbReference type="EC" id="3.1.3.16"/>
    </reaction>
</comment>
<comment type="catalytic activity">
    <reaction>
        <text>O-phospho-L-threonyl-[protein] + H2O = L-threonyl-[protein] + phosphate</text>
        <dbReference type="Rhea" id="RHEA:47004"/>
        <dbReference type="Rhea" id="RHEA-COMP:11060"/>
        <dbReference type="Rhea" id="RHEA-COMP:11605"/>
        <dbReference type="ChEBI" id="CHEBI:15377"/>
        <dbReference type="ChEBI" id="CHEBI:30013"/>
        <dbReference type="ChEBI" id="CHEBI:43474"/>
        <dbReference type="ChEBI" id="CHEBI:61977"/>
        <dbReference type="EC" id="3.1.3.16"/>
    </reaction>
</comment>
<comment type="cofactor">
    <cofactor evidence="1 5">
        <name>Mg(2+)</name>
        <dbReference type="ChEBI" id="CHEBI:18420"/>
    </cofactor>
    <cofactor evidence="1 5">
        <name>Mn(2+)</name>
        <dbReference type="ChEBI" id="CHEBI:29035"/>
    </cofactor>
</comment>
<comment type="similarity">
    <text evidence="3">Belongs to the PP2C family.</text>
</comment>
<gene>
    <name evidence="2" type="primary">fig</name>
    <name type="ORF">GA20482</name>
</gene>
<proteinExistence type="inferred from homology"/>
<sequence>MAFMRSKPSLGSLARVAFRWCGPGVGLVNYSQEPYLVKAVQGKSKPRSPTLQSAMQPRAQAETIQAPKCFGEDSFFFSSTPKADVMGVADGVGGWRDRGIDAGRFSRDLMQRCFVHAQKPTFDGRNPRQLLSECYGEMKRKWKPILGSSTACVVAFNRSESALYTANLGDSGYVVIRNGSVLDRSEEQTHFFNMPFQLTVPPPDSNREMWFCDDPSEAVATRLLLQPDDLVLVATDGLFDNMPEQMLLEMLSKVQGVHEQKAIQEAVNRVVERAGALSINPIYKSPFCLRALENNVAYGGGGKPDDITVVLASVAMRQCNTVGDSNESKGSDLRPRLSFP</sequence>
<protein>
    <recommendedName>
        <fullName>Protein phosphatase PTC7 homolog fig</fullName>
    </recommendedName>
    <alternativeName>
        <fullName>Fos intronic gene protein</fullName>
        <ecNumber>3.1.3.16</ecNumber>
    </alternativeName>
</protein>
<reference evidence="6" key="1">
    <citation type="journal article" date="2005" name="Genome Res.">
        <title>Comparative genome sequencing of Drosophila pseudoobscura: chromosomal, gene, and cis-element evolution.</title>
        <authorList>
            <person name="Richards S."/>
            <person name="Liu Y."/>
            <person name="Bettencourt B.R."/>
            <person name="Hradecky P."/>
            <person name="Letovsky S."/>
            <person name="Nielsen R."/>
            <person name="Thornton K."/>
            <person name="Hubisz M.J."/>
            <person name="Chen R."/>
            <person name="Meisel R.P."/>
            <person name="Couronne O."/>
            <person name="Hua S."/>
            <person name="Smith M.A."/>
            <person name="Zhang P."/>
            <person name="Liu J."/>
            <person name="Bussemaker H.J."/>
            <person name="van Batenburg M.F."/>
            <person name="Howells S.L."/>
            <person name="Scherer S.E."/>
            <person name="Sodergren E."/>
            <person name="Matthews B.B."/>
            <person name="Crosby M.A."/>
            <person name="Schroeder A.J."/>
            <person name="Ortiz-Barrientos D."/>
            <person name="Rives C.M."/>
            <person name="Metzker M.L."/>
            <person name="Muzny D.M."/>
            <person name="Scott G."/>
            <person name="Steffen D."/>
            <person name="Wheeler D.A."/>
            <person name="Worley K.C."/>
            <person name="Havlak P."/>
            <person name="Durbin K.J."/>
            <person name="Egan A."/>
            <person name="Gill R."/>
            <person name="Hume J."/>
            <person name="Morgan M.B."/>
            <person name="Miner G."/>
            <person name="Hamilton C."/>
            <person name="Huang Y."/>
            <person name="Waldron L."/>
            <person name="Verduzco D."/>
            <person name="Clerc-Blankenburg K.P."/>
            <person name="Dubchak I."/>
            <person name="Noor M.A.F."/>
            <person name="Anderson W."/>
            <person name="White K.P."/>
            <person name="Clark A.G."/>
            <person name="Schaeffer S.W."/>
            <person name="Gelbart W.M."/>
            <person name="Weinstock G.M."/>
            <person name="Gibbs R.A."/>
        </authorList>
    </citation>
    <scope>NUCLEOTIDE SEQUENCE [LARGE SCALE GENOMIC DNA]</scope>
    <source>
        <strain>MV2-25 / Tucson 14011-0121.94</strain>
    </source>
</reference>
<organism>
    <name type="scientific">Drosophila pseudoobscura pseudoobscura</name>
    <name type="common">Fruit fly</name>
    <dbReference type="NCBI Taxonomy" id="46245"/>
    <lineage>
        <taxon>Eukaryota</taxon>
        <taxon>Metazoa</taxon>
        <taxon>Ecdysozoa</taxon>
        <taxon>Arthropoda</taxon>
        <taxon>Hexapoda</taxon>
        <taxon>Insecta</taxon>
        <taxon>Pterygota</taxon>
        <taxon>Neoptera</taxon>
        <taxon>Endopterygota</taxon>
        <taxon>Diptera</taxon>
        <taxon>Brachycera</taxon>
        <taxon>Muscomorpha</taxon>
        <taxon>Ephydroidea</taxon>
        <taxon>Drosophilidae</taxon>
        <taxon>Drosophila</taxon>
        <taxon>Sophophora</taxon>
    </lineage>
</organism>
<accession>Q29AP0</accession>
<keyword id="KW-0378">Hydrolase</keyword>
<keyword id="KW-0460">Magnesium</keyword>
<keyword id="KW-0464">Manganese</keyword>
<keyword id="KW-0479">Metal-binding</keyword>
<keyword id="KW-0904">Protein phosphatase</keyword>
<keyword id="KW-1185">Reference proteome</keyword>
<feature type="chain" id="PRO_0000377401" description="Protein phosphatase PTC7 homolog fig">
    <location>
        <begin position="1"/>
        <end position="340"/>
    </location>
</feature>
<feature type="domain" description="PPM-type phosphatase" evidence="4">
    <location>
        <begin position="58"/>
        <end position="314"/>
    </location>
</feature>
<feature type="binding site" evidence="1">
    <location>
        <position position="90"/>
    </location>
    <ligand>
        <name>Mn(2+)</name>
        <dbReference type="ChEBI" id="CHEBI:29035"/>
        <label>1</label>
    </ligand>
</feature>
<feature type="binding site" evidence="1">
    <location>
        <position position="90"/>
    </location>
    <ligand>
        <name>Mn(2+)</name>
        <dbReference type="ChEBI" id="CHEBI:29035"/>
        <label>2</label>
    </ligand>
</feature>
<feature type="binding site" evidence="1">
    <location>
        <position position="91"/>
    </location>
    <ligand>
        <name>Mn(2+)</name>
        <dbReference type="ChEBI" id="CHEBI:29035"/>
        <label>1</label>
    </ligand>
</feature>
<feature type="binding site" evidence="1">
    <location>
        <position position="236"/>
    </location>
    <ligand>
        <name>Mn(2+)</name>
        <dbReference type="ChEBI" id="CHEBI:29035"/>
        <label>2</label>
    </ligand>
</feature>
<name>PTC71_DROPS</name>
<dbReference type="EC" id="3.1.3.16"/>
<dbReference type="EMBL" id="CM000070">
    <property type="protein sequence ID" value="EAL27309.2"/>
    <property type="molecule type" value="Genomic_DNA"/>
</dbReference>
<dbReference type="RefSeq" id="XP_001358172.2">
    <property type="nucleotide sequence ID" value="XM_001358135.3"/>
</dbReference>
<dbReference type="SMR" id="Q29AP0"/>
<dbReference type="FunCoup" id="Q29AP0">
    <property type="interactions" value="94"/>
</dbReference>
<dbReference type="STRING" id="46245.Q29AP0"/>
<dbReference type="EnsemblMetazoa" id="FBtr0285071">
    <property type="protein sequence ID" value="FBpp0283509"/>
    <property type="gene ID" value="FBgn0080477"/>
</dbReference>
<dbReference type="GeneID" id="4800997"/>
<dbReference type="KEGG" id="dpo:4800997"/>
<dbReference type="CTD" id="43511"/>
<dbReference type="eggNOG" id="KOG1379">
    <property type="taxonomic scope" value="Eukaryota"/>
</dbReference>
<dbReference type="HOGENOM" id="CLU_029404_3_0_1"/>
<dbReference type="InParanoid" id="Q29AP0"/>
<dbReference type="OMA" id="DSWFVSS"/>
<dbReference type="Proteomes" id="UP000001819">
    <property type="component" value="Chromosome 2"/>
</dbReference>
<dbReference type="Bgee" id="FBgn0080477">
    <property type="expression patterns" value="Expressed in male reproductive system and 1 other cell type or tissue"/>
</dbReference>
<dbReference type="GO" id="GO:0005739">
    <property type="term" value="C:mitochondrion"/>
    <property type="evidence" value="ECO:0007669"/>
    <property type="project" value="TreeGrafter"/>
</dbReference>
<dbReference type="GO" id="GO:0046872">
    <property type="term" value="F:metal ion binding"/>
    <property type="evidence" value="ECO:0007669"/>
    <property type="project" value="UniProtKB-KW"/>
</dbReference>
<dbReference type="GO" id="GO:0004722">
    <property type="term" value="F:protein serine/threonine phosphatase activity"/>
    <property type="evidence" value="ECO:0000250"/>
    <property type="project" value="UniProtKB"/>
</dbReference>
<dbReference type="GO" id="GO:0016311">
    <property type="term" value="P:dephosphorylation"/>
    <property type="evidence" value="ECO:0000250"/>
    <property type="project" value="UniProtKB"/>
</dbReference>
<dbReference type="FunFam" id="3.60.40.10:FF:000009">
    <property type="entry name" value="Blast:Protein phosphatase PTC7 homolog"/>
    <property type="match status" value="1"/>
</dbReference>
<dbReference type="Gene3D" id="3.60.40.10">
    <property type="entry name" value="PPM-type phosphatase domain"/>
    <property type="match status" value="1"/>
</dbReference>
<dbReference type="InterPro" id="IPR036457">
    <property type="entry name" value="PPM-type-like_dom_sf"/>
</dbReference>
<dbReference type="InterPro" id="IPR001932">
    <property type="entry name" value="PPM-type_phosphatase-like_dom"/>
</dbReference>
<dbReference type="InterPro" id="IPR039123">
    <property type="entry name" value="PPTC7"/>
</dbReference>
<dbReference type="PANTHER" id="PTHR12320">
    <property type="entry name" value="PROTEIN PHOSPHATASE 2C"/>
    <property type="match status" value="1"/>
</dbReference>
<dbReference type="PANTHER" id="PTHR12320:SF1">
    <property type="entry name" value="PROTEIN PHOSPHATASE PTC7 HOMOLOG"/>
    <property type="match status" value="1"/>
</dbReference>
<dbReference type="Pfam" id="PF13672">
    <property type="entry name" value="PP2C_2"/>
    <property type="match status" value="1"/>
</dbReference>
<dbReference type="SMART" id="SM00331">
    <property type="entry name" value="PP2C_SIG"/>
    <property type="match status" value="1"/>
</dbReference>
<dbReference type="SMART" id="SM00332">
    <property type="entry name" value="PP2Cc"/>
    <property type="match status" value="1"/>
</dbReference>
<dbReference type="SUPFAM" id="SSF81606">
    <property type="entry name" value="PP2C-like"/>
    <property type="match status" value="1"/>
</dbReference>
<dbReference type="PROSITE" id="PS51746">
    <property type="entry name" value="PPM_2"/>
    <property type="match status" value="1"/>
</dbReference>